<organism>
    <name type="scientific">Escherichia coli O81 (strain ED1a)</name>
    <dbReference type="NCBI Taxonomy" id="585397"/>
    <lineage>
        <taxon>Bacteria</taxon>
        <taxon>Pseudomonadati</taxon>
        <taxon>Pseudomonadota</taxon>
        <taxon>Gammaproteobacteria</taxon>
        <taxon>Enterobacterales</taxon>
        <taxon>Enterobacteriaceae</taxon>
        <taxon>Escherichia</taxon>
    </lineage>
</organism>
<sequence>MQKFDTRTFQGLILTLQDYWARQGCTIVQPLDMEVGAGTSHPMTCLRALGPEPMAAAYVQPSRRPTDGRYGENPNRLQHYYQFQVVIKPSPDNIQELYLGSLKELGMDPTIHDIRFVEDNWENPTLGAWGLGWEVWLNGMEVTQFTYFQQVGGLECKPVTGEITYGLERLAMYIQGVDSVYDLVWSDGPLGKTTYGDVFHQNEVEQSTYNFEYADVDFLFTCFEQYEKEAQQLLALENPLPLPAYERILKAAHSFNLLDARKAISVTERQRYILRIRTLTKAVAEAYYASREALGFPMCNKDK</sequence>
<name>SYGA_ECO81</name>
<gene>
    <name evidence="1" type="primary">glyQ</name>
    <name type="ordered locus">ECED1_4243</name>
</gene>
<protein>
    <recommendedName>
        <fullName evidence="1">Glycine--tRNA ligase alpha subunit</fullName>
        <ecNumber evidence="1">6.1.1.14</ecNumber>
    </recommendedName>
    <alternativeName>
        <fullName evidence="1">Glycyl-tRNA synthetase alpha subunit</fullName>
        <shortName evidence="1">GlyRS</shortName>
    </alternativeName>
</protein>
<accession>B7N203</accession>
<comment type="catalytic activity">
    <reaction evidence="1">
        <text>tRNA(Gly) + glycine + ATP = glycyl-tRNA(Gly) + AMP + diphosphate</text>
        <dbReference type="Rhea" id="RHEA:16013"/>
        <dbReference type="Rhea" id="RHEA-COMP:9664"/>
        <dbReference type="Rhea" id="RHEA-COMP:9683"/>
        <dbReference type="ChEBI" id="CHEBI:30616"/>
        <dbReference type="ChEBI" id="CHEBI:33019"/>
        <dbReference type="ChEBI" id="CHEBI:57305"/>
        <dbReference type="ChEBI" id="CHEBI:78442"/>
        <dbReference type="ChEBI" id="CHEBI:78522"/>
        <dbReference type="ChEBI" id="CHEBI:456215"/>
        <dbReference type="EC" id="6.1.1.14"/>
    </reaction>
</comment>
<comment type="subunit">
    <text evidence="1">Tetramer of two alpha and two beta subunits.</text>
</comment>
<comment type="subcellular location">
    <subcellularLocation>
        <location evidence="1">Cytoplasm</location>
    </subcellularLocation>
</comment>
<comment type="similarity">
    <text evidence="1">Belongs to the class-II aminoacyl-tRNA synthetase family.</text>
</comment>
<reference key="1">
    <citation type="journal article" date="2009" name="PLoS Genet.">
        <title>Organised genome dynamics in the Escherichia coli species results in highly diverse adaptive paths.</title>
        <authorList>
            <person name="Touchon M."/>
            <person name="Hoede C."/>
            <person name="Tenaillon O."/>
            <person name="Barbe V."/>
            <person name="Baeriswyl S."/>
            <person name="Bidet P."/>
            <person name="Bingen E."/>
            <person name="Bonacorsi S."/>
            <person name="Bouchier C."/>
            <person name="Bouvet O."/>
            <person name="Calteau A."/>
            <person name="Chiapello H."/>
            <person name="Clermont O."/>
            <person name="Cruveiller S."/>
            <person name="Danchin A."/>
            <person name="Diard M."/>
            <person name="Dossat C."/>
            <person name="Karoui M.E."/>
            <person name="Frapy E."/>
            <person name="Garry L."/>
            <person name="Ghigo J.M."/>
            <person name="Gilles A.M."/>
            <person name="Johnson J."/>
            <person name="Le Bouguenec C."/>
            <person name="Lescat M."/>
            <person name="Mangenot S."/>
            <person name="Martinez-Jehanne V."/>
            <person name="Matic I."/>
            <person name="Nassif X."/>
            <person name="Oztas S."/>
            <person name="Petit M.A."/>
            <person name="Pichon C."/>
            <person name="Rouy Z."/>
            <person name="Ruf C.S."/>
            <person name="Schneider D."/>
            <person name="Tourret J."/>
            <person name="Vacherie B."/>
            <person name="Vallenet D."/>
            <person name="Medigue C."/>
            <person name="Rocha E.P.C."/>
            <person name="Denamur E."/>
        </authorList>
    </citation>
    <scope>NUCLEOTIDE SEQUENCE [LARGE SCALE GENOMIC DNA]</scope>
    <source>
        <strain>ED1a</strain>
    </source>
</reference>
<evidence type="ECO:0000255" key="1">
    <source>
        <dbReference type="HAMAP-Rule" id="MF_00254"/>
    </source>
</evidence>
<keyword id="KW-0030">Aminoacyl-tRNA synthetase</keyword>
<keyword id="KW-0067">ATP-binding</keyword>
<keyword id="KW-0963">Cytoplasm</keyword>
<keyword id="KW-0436">Ligase</keyword>
<keyword id="KW-0547">Nucleotide-binding</keyword>
<keyword id="KW-0648">Protein biosynthesis</keyword>
<feature type="chain" id="PRO_1000125549" description="Glycine--tRNA ligase alpha subunit">
    <location>
        <begin position="1"/>
        <end position="303"/>
    </location>
</feature>
<proteinExistence type="inferred from homology"/>
<dbReference type="EC" id="6.1.1.14" evidence="1"/>
<dbReference type="EMBL" id="CU928162">
    <property type="protein sequence ID" value="CAR10374.2"/>
    <property type="molecule type" value="Genomic_DNA"/>
</dbReference>
<dbReference type="RefSeq" id="WP_001168544.1">
    <property type="nucleotide sequence ID" value="NC_011745.1"/>
</dbReference>
<dbReference type="SMR" id="B7N203"/>
<dbReference type="GeneID" id="93778290"/>
<dbReference type="KEGG" id="ecq:ECED1_4243"/>
<dbReference type="HOGENOM" id="CLU_057066_1_0_6"/>
<dbReference type="Proteomes" id="UP000000748">
    <property type="component" value="Chromosome"/>
</dbReference>
<dbReference type="GO" id="GO:0005829">
    <property type="term" value="C:cytosol"/>
    <property type="evidence" value="ECO:0007669"/>
    <property type="project" value="TreeGrafter"/>
</dbReference>
<dbReference type="GO" id="GO:0005524">
    <property type="term" value="F:ATP binding"/>
    <property type="evidence" value="ECO:0007669"/>
    <property type="project" value="UniProtKB-UniRule"/>
</dbReference>
<dbReference type="GO" id="GO:0004820">
    <property type="term" value="F:glycine-tRNA ligase activity"/>
    <property type="evidence" value="ECO:0007669"/>
    <property type="project" value="UniProtKB-UniRule"/>
</dbReference>
<dbReference type="GO" id="GO:0006426">
    <property type="term" value="P:glycyl-tRNA aminoacylation"/>
    <property type="evidence" value="ECO:0007669"/>
    <property type="project" value="UniProtKB-UniRule"/>
</dbReference>
<dbReference type="CDD" id="cd00733">
    <property type="entry name" value="GlyRS_alpha_core"/>
    <property type="match status" value="1"/>
</dbReference>
<dbReference type="FunFam" id="1.20.58.180:FF:000001">
    <property type="entry name" value="Glycine--tRNA ligase alpha subunit"/>
    <property type="match status" value="1"/>
</dbReference>
<dbReference type="FunFam" id="3.30.930.10:FF:000006">
    <property type="entry name" value="Glycine--tRNA ligase alpha subunit"/>
    <property type="match status" value="1"/>
</dbReference>
<dbReference type="Gene3D" id="3.30.930.10">
    <property type="entry name" value="Bira Bifunctional Protein, Domain 2"/>
    <property type="match status" value="1"/>
</dbReference>
<dbReference type="Gene3D" id="1.20.58.180">
    <property type="entry name" value="Class II aaRS and biotin synthetases, domain 2"/>
    <property type="match status" value="1"/>
</dbReference>
<dbReference type="HAMAP" id="MF_00254">
    <property type="entry name" value="Gly_tRNA_synth_alpha"/>
    <property type="match status" value="1"/>
</dbReference>
<dbReference type="InterPro" id="IPR045864">
    <property type="entry name" value="aa-tRNA-synth_II/BPL/LPL"/>
</dbReference>
<dbReference type="InterPro" id="IPR006194">
    <property type="entry name" value="Gly-tRNA-synth_heterodimer"/>
</dbReference>
<dbReference type="InterPro" id="IPR002310">
    <property type="entry name" value="Gly-tRNA_ligase_asu"/>
</dbReference>
<dbReference type="NCBIfam" id="TIGR00388">
    <property type="entry name" value="glyQ"/>
    <property type="match status" value="1"/>
</dbReference>
<dbReference type="NCBIfam" id="NF006827">
    <property type="entry name" value="PRK09348.1"/>
    <property type="match status" value="1"/>
</dbReference>
<dbReference type="PANTHER" id="PTHR30075:SF2">
    <property type="entry name" value="GLYCINE--TRNA LIGASE, CHLOROPLASTIC_MITOCHONDRIAL 2"/>
    <property type="match status" value="1"/>
</dbReference>
<dbReference type="PANTHER" id="PTHR30075">
    <property type="entry name" value="GLYCYL-TRNA SYNTHETASE"/>
    <property type="match status" value="1"/>
</dbReference>
<dbReference type="Pfam" id="PF02091">
    <property type="entry name" value="tRNA-synt_2e"/>
    <property type="match status" value="1"/>
</dbReference>
<dbReference type="PRINTS" id="PR01044">
    <property type="entry name" value="TRNASYNTHGA"/>
</dbReference>
<dbReference type="SUPFAM" id="SSF55681">
    <property type="entry name" value="Class II aaRS and biotin synthetases"/>
    <property type="match status" value="1"/>
</dbReference>
<dbReference type="PROSITE" id="PS50861">
    <property type="entry name" value="AA_TRNA_LIGASE_II_GLYAB"/>
    <property type="match status" value="1"/>
</dbReference>